<name>CSA3_SACS2</name>
<gene>
    <name type="primary">csa3</name>
    <name type="ordered locus">SSO1445</name>
</gene>
<comment type="function">
    <text evidence="1">CRISPR (clustered regularly interspaced short palindromic repeat) is an adaptive immune system that provides protection against mobile genetic elements (viruses, transposable elements and conjugative plasmids). CRISPR clusters contain spacers, sequences complementary to antecedent mobile elements, and target invading nucleic acids. CRISPR clusters are transcribed and processed into CRISPR RNA (crRNA) (By similarity).</text>
</comment>
<comment type="subunit">
    <text evidence="2">Homodimer.</text>
</comment>
<comment type="similarity">
    <text evidence="3">Belongs to the CRISPR-associated Csa3 family.</text>
</comment>
<feature type="chain" id="PRO_0000417889" description="CRISPR locus-related putative DNA-binding protein Csa3">
    <location>
        <begin position="1"/>
        <end position="237"/>
    </location>
</feature>
<feature type="strand" evidence="4">
    <location>
        <begin position="3"/>
        <end position="6"/>
    </location>
</feature>
<feature type="helix" evidence="4">
    <location>
        <begin position="13"/>
        <end position="21"/>
    </location>
</feature>
<feature type="strand" evidence="4">
    <location>
        <begin position="28"/>
        <end position="37"/>
    </location>
</feature>
<feature type="helix" evidence="4">
    <location>
        <begin position="40"/>
        <end position="56"/>
    </location>
</feature>
<feature type="strand" evidence="4">
    <location>
        <begin position="61"/>
        <end position="66"/>
    </location>
</feature>
<feature type="helix" evidence="4">
    <location>
        <begin position="71"/>
        <end position="82"/>
    </location>
</feature>
<feature type="strand" evidence="4">
    <location>
        <begin position="87"/>
        <end position="92"/>
    </location>
</feature>
<feature type="strand" evidence="4">
    <location>
        <begin position="94"/>
        <end position="96"/>
    </location>
</feature>
<feature type="helix" evidence="4">
    <location>
        <begin position="98"/>
        <end position="110"/>
    </location>
</feature>
<feature type="strand" evidence="4">
    <location>
        <begin position="115"/>
        <end position="120"/>
    </location>
</feature>
<feature type="strand" evidence="4">
    <location>
        <begin position="128"/>
        <end position="132"/>
    </location>
</feature>
<feature type="helix" evidence="4">
    <location>
        <begin position="133"/>
        <end position="140"/>
    </location>
</feature>
<feature type="helix" evidence="4">
    <location>
        <begin position="145"/>
        <end position="157"/>
    </location>
</feature>
<feature type="helix" evidence="4">
    <location>
        <begin position="162"/>
        <end position="169"/>
    </location>
</feature>
<feature type="helix" evidence="4">
    <location>
        <begin position="173"/>
        <end position="185"/>
    </location>
</feature>
<feature type="strand" evidence="4">
    <location>
        <begin position="188"/>
        <end position="192"/>
    </location>
</feature>
<feature type="turn" evidence="4">
    <location>
        <begin position="193"/>
        <end position="196"/>
    </location>
</feature>
<feature type="strand" evidence="4">
    <location>
        <begin position="197"/>
        <end position="200"/>
    </location>
</feature>
<feature type="helix" evidence="4">
    <location>
        <begin position="202"/>
        <end position="210"/>
    </location>
</feature>
<organism>
    <name type="scientific">Saccharolobus solfataricus (strain ATCC 35092 / DSM 1617 / JCM 11322 / P2)</name>
    <name type="common">Sulfolobus solfataricus</name>
    <dbReference type="NCBI Taxonomy" id="273057"/>
    <lineage>
        <taxon>Archaea</taxon>
        <taxon>Thermoproteota</taxon>
        <taxon>Thermoprotei</taxon>
        <taxon>Sulfolobales</taxon>
        <taxon>Sulfolobaceae</taxon>
        <taxon>Saccharolobus</taxon>
    </lineage>
</organism>
<keyword id="KW-0002">3D-structure</keyword>
<keyword id="KW-0051">Antiviral defense</keyword>
<keyword id="KW-0238">DNA-binding</keyword>
<keyword id="KW-1185">Reference proteome</keyword>
<dbReference type="EMBL" id="AE006641">
    <property type="protein sequence ID" value="AAK41678.1"/>
    <property type="molecule type" value="Genomic_DNA"/>
</dbReference>
<dbReference type="PIR" id="G90302">
    <property type="entry name" value="G90302"/>
</dbReference>
<dbReference type="RefSeq" id="WP_010923410.1">
    <property type="nucleotide sequence ID" value="NC_002754.1"/>
</dbReference>
<dbReference type="PDB" id="2WTE">
    <property type="method" value="X-ray"/>
    <property type="resolution" value="1.80 A"/>
    <property type="chains" value="A/B=1-237"/>
</dbReference>
<dbReference type="PDB" id="6W11">
    <property type="method" value="X-ray"/>
    <property type="resolution" value="2.46 A"/>
    <property type="chains" value="A/B=1-212"/>
</dbReference>
<dbReference type="PDB" id="6WXQ">
    <property type="method" value="X-ray"/>
    <property type="resolution" value="2.05 A"/>
    <property type="chains" value="A/B=1-237"/>
</dbReference>
<dbReference type="PDBsum" id="2WTE"/>
<dbReference type="PDBsum" id="6W11"/>
<dbReference type="PDBsum" id="6WXQ"/>
<dbReference type="SMR" id="Q97Y88"/>
<dbReference type="STRING" id="273057.SSO1445"/>
<dbReference type="PaxDb" id="273057-SSO1445"/>
<dbReference type="DNASU" id="1454457"/>
<dbReference type="EnsemblBacteria" id="AAK41678">
    <property type="protein sequence ID" value="AAK41678"/>
    <property type="gene ID" value="SSO1445"/>
</dbReference>
<dbReference type="GeneID" id="1454457"/>
<dbReference type="GeneID" id="27427813"/>
<dbReference type="KEGG" id="sso:SSO1445"/>
<dbReference type="PATRIC" id="fig|273057.12.peg.1476"/>
<dbReference type="eggNOG" id="arCOG01446">
    <property type="taxonomic scope" value="Archaea"/>
</dbReference>
<dbReference type="HOGENOM" id="CLU_107894_1_0_2"/>
<dbReference type="InParanoid" id="Q97Y88"/>
<dbReference type="EvolutionaryTrace" id="Q97Y88"/>
<dbReference type="Proteomes" id="UP000001974">
    <property type="component" value="Chromosome"/>
</dbReference>
<dbReference type="GO" id="GO:0003677">
    <property type="term" value="F:DNA binding"/>
    <property type="evidence" value="ECO:0007669"/>
    <property type="project" value="UniProtKB-KW"/>
</dbReference>
<dbReference type="GO" id="GO:0051607">
    <property type="term" value="P:defense response to virus"/>
    <property type="evidence" value="ECO:0007669"/>
    <property type="project" value="UniProtKB-KW"/>
</dbReference>
<dbReference type="CDD" id="cd09655">
    <property type="entry name" value="CasRa_I-A"/>
    <property type="match status" value="1"/>
</dbReference>
<dbReference type="Gene3D" id="3.40.50.11700">
    <property type="match status" value="1"/>
</dbReference>
<dbReference type="Gene3D" id="1.10.10.10">
    <property type="entry name" value="Winged helix-like DNA-binding domain superfamily/Winged helix DNA-binding domain"/>
    <property type="match status" value="1"/>
</dbReference>
<dbReference type="InterPro" id="IPR010163">
    <property type="entry name" value="Csa3"/>
</dbReference>
<dbReference type="InterPro" id="IPR054588">
    <property type="entry name" value="Csa3_N"/>
</dbReference>
<dbReference type="InterPro" id="IPR036388">
    <property type="entry name" value="WH-like_DNA-bd_sf"/>
</dbReference>
<dbReference type="InterPro" id="IPR036390">
    <property type="entry name" value="WH_DNA-bd_sf"/>
</dbReference>
<dbReference type="NCBIfam" id="TIGR01884">
    <property type="entry name" value="cas_HTH"/>
    <property type="match status" value="1"/>
</dbReference>
<dbReference type="Pfam" id="PF22662">
    <property type="entry name" value="Csa3_N"/>
    <property type="match status" value="1"/>
</dbReference>
<dbReference type="Pfam" id="PF25212">
    <property type="entry name" value="HVO_A0114"/>
    <property type="match status" value="1"/>
</dbReference>
<dbReference type="SUPFAM" id="SSF46785">
    <property type="entry name" value="Winged helix' DNA-binding domain"/>
    <property type="match status" value="1"/>
</dbReference>
<accession>Q97Y88</accession>
<sequence>MKSYFVTMGFNETFLLRLLNETSAQKEDSLVIVVPSPIVSGTRAAIESLRAQISRLNYPPPRIYEIEITDFNLALSKILDIILTLPEPIISDLTMGMRMINTLILLGIIVSRKRFTVYVRDEGGGSRVISFNDNTIRALMRDYSREEMKLLNVLYETKGTGITELAKMLDKSEKTLINKIAELKKFGILTQKGKDRKVELNELGLNVIKLNKSVIESSKSSEELVKENKGKEVNIPY</sequence>
<proteinExistence type="evidence at protein level"/>
<evidence type="ECO:0000250" key="1"/>
<evidence type="ECO:0000269" key="2">
    <source>
    </source>
</evidence>
<evidence type="ECO:0000305" key="3"/>
<evidence type="ECO:0007829" key="4">
    <source>
        <dbReference type="PDB" id="2WTE"/>
    </source>
</evidence>
<protein>
    <recommendedName>
        <fullName>CRISPR locus-related putative DNA-binding protein Csa3</fullName>
    </recommendedName>
</protein>
<reference key="1">
    <citation type="journal article" date="2001" name="Proc. Natl. Acad. Sci. U.S.A.">
        <title>The complete genome of the crenarchaeon Sulfolobus solfataricus P2.</title>
        <authorList>
            <person name="She Q."/>
            <person name="Singh R.K."/>
            <person name="Confalonieri F."/>
            <person name="Zivanovic Y."/>
            <person name="Allard G."/>
            <person name="Awayez M.J."/>
            <person name="Chan-Weiher C.C.-Y."/>
            <person name="Clausen I.G."/>
            <person name="Curtis B.A."/>
            <person name="De Moors A."/>
            <person name="Erauso G."/>
            <person name="Fletcher C."/>
            <person name="Gordon P.M.K."/>
            <person name="Heikamp-de Jong I."/>
            <person name="Jeffries A.C."/>
            <person name="Kozera C.J."/>
            <person name="Medina N."/>
            <person name="Peng X."/>
            <person name="Thi-Ngoc H.P."/>
            <person name="Redder P."/>
            <person name="Schenk M.E."/>
            <person name="Theriault C."/>
            <person name="Tolstrup N."/>
            <person name="Charlebois R.L."/>
            <person name="Doolittle W.F."/>
            <person name="Duguet M."/>
            <person name="Gaasterland T."/>
            <person name="Garrett R.A."/>
            <person name="Ragan M.A."/>
            <person name="Sensen C.W."/>
            <person name="Van der Oost J."/>
        </authorList>
    </citation>
    <scope>NUCLEOTIDE SEQUENCE [LARGE SCALE GENOMIC DNA]</scope>
    <source>
        <strain>ATCC 35092 / DSM 1617 / JCM 11322 / P2</strain>
    </source>
</reference>
<reference key="2">
    <citation type="journal article" date="2011" name="J. Mol. Biol.">
        <title>The structure of the CRISPR-associated protein Csa3 provides insight into the regulation of the CRISPR/Cas system.</title>
        <authorList>
            <person name="Lintner N.G."/>
            <person name="Frankel K.A."/>
            <person name="Tsutakawa S.E."/>
            <person name="Alsbury D.L."/>
            <person name="Copie V."/>
            <person name="Young M.J."/>
            <person name="Tainer J.A."/>
            <person name="Lawrence C.M."/>
        </authorList>
    </citation>
    <scope>X-RAY CRYSTALLOGRAPHY (1.80 ANGSTROMS)</scope>
    <scope>SUBUNIT</scope>
    <source>
        <strain>ATCC 35092 / DSM 1617 / JCM 11322 / P2</strain>
    </source>
</reference>